<proteinExistence type="inferred from homology"/>
<feature type="chain" id="PRO_0000265473" description="Small ribosomal subunit protein uS19">
    <location>
        <begin position="1"/>
        <end position="140"/>
    </location>
</feature>
<comment type="function">
    <text evidence="1">Protein S19 forms a complex with S13 that binds strongly to the 16S ribosomal RNA.</text>
</comment>
<comment type="similarity">
    <text evidence="1">Belongs to the universal ribosomal protein uS19 family.</text>
</comment>
<sequence>MSSEYQIGHEGEFTYRGHTLDELQEMELDEVAELLPARQRRTIKRGLSVEQEKLLDEAREAGEEETANNPIRTHLRDMPILPRFVGLTFAVYNGQSFERVEVEPEMIGHYLGEFQLTRTSVEHGQAGIGATRSSKFVPLK</sequence>
<reference key="1">
    <citation type="journal article" date="2005" name="Genome Res.">
        <title>Living with two extremes: conclusions from the genome sequence of Natronomonas pharaonis.</title>
        <authorList>
            <person name="Falb M."/>
            <person name="Pfeiffer F."/>
            <person name="Palm P."/>
            <person name="Rodewald K."/>
            <person name="Hickmann V."/>
            <person name="Tittor J."/>
            <person name="Oesterhelt D."/>
        </authorList>
    </citation>
    <scope>NUCLEOTIDE SEQUENCE [LARGE SCALE GENOMIC DNA]</scope>
    <source>
        <strain>ATCC 35678 / DSM 2160 / CIP 103997 / JCM 8858 / NBRC 14720 / NCIMB 2260 / Gabara</strain>
    </source>
</reference>
<name>RS19_NATPD</name>
<dbReference type="EMBL" id="CR936257">
    <property type="protein sequence ID" value="CAI50522.1"/>
    <property type="molecule type" value="Genomic_DNA"/>
</dbReference>
<dbReference type="RefSeq" id="WP_011324134.1">
    <property type="nucleotide sequence ID" value="NC_007426.1"/>
</dbReference>
<dbReference type="SMR" id="Q3IMY4"/>
<dbReference type="STRING" id="348780.NP_4862A"/>
<dbReference type="EnsemblBacteria" id="CAI50522">
    <property type="protein sequence ID" value="CAI50522"/>
    <property type="gene ID" value="NP_4862A"/>
</dbReference>
<dbReference type="GeneID" id="3703173"/>
<dbReference type="KEGG" id="nph:NP_4862A"/>
<dbReference type="eggNOG" id="arCOG04099">
    <property type="taxonomic scope" value="Archaea"/>
</dbReference>
<dbReference type="HOGENOM" id="CLU_097347_1_0_2"/>
<dbReference type="OrthoDB" id="30559at2157"/>
<dbReference type="Proteomes" id="UP000002698">
    <property type="component" value="Chromosome"/>
</dbReference>
<dbReference type="GO" id="GO:0022627">
    <property type="term" value="C:cytosolic small ribosomal subunit"/>
    <property type="evidence" value="ECO:0007669"/>
    <property type="project" value="TreeGrafter"/>
</dbReference>
<dbReference type="GO" id="GO:0019843">
    <property type="term" value="F:rRNA binding"/>
    <property type="evidence" value="ECO:0007669"/>
    <property type="project" value="UniProtKB-UniRule"/>
</dbReference>
<dbReference type="GO" id="GO:0003735">
    <property type="term" value="F:structural constituent of ribosome"/>
    <property type="evidence" value="ECO:0007669"/>
    <property type="project" value="InterPro"/>
</dbReference>
<dbReference type="GO" id="GO:0000028">
    <property type="term" value="P:ribosomal small subunit assembly"/>
    <property type="evidence" value="ECO:0007669"/>
    <property type="project" value="TreeGrafter"/>
</dbReference>
<dbReference type="GO" id="GO:0006412">
    <property type="term" value="P:translation"/>
    <property type="evidence" value="ECO:0007669"/>
    <property type="project" value="UniProtKB-UniRule"/>
</dbReference>
<dbReference type="FunFam" id="3.30.860.10:FF:000002">
    <property type="entry name" value="40S ribosomal protein S15"/>
    <property type="match status" value="1"/>
</dbReference>
<dbReference type="Gene3D" id="3.30.860.10">
    <property type="entry name" value="30s Ribosomal Protein S19, Chain A"/>
    <property type="match status" value="1"/>
</dbReference>
<dbReference type="HAMAP" id="MF_00531">
    <property type="entry name" value="Ribosomal_uS19"/>
    <property type="match status" value="1"/>
</dbReference>
<dbReference type="InterPro" id="IPR002222">
    <property type="entry name" value="Ribosomal_uS19"/>
</dbReference>
<dbReference type="InterPro" id="IPR020934">
    <property type="entry name" value="Ribosomal_uS19_CS"/>
</dbReference>
<dbReference type="InterPro" id="IPR005713">
    <property type="entry name" value="Ribosomal_uS19_euk/arc"/>
</dbReference>
<dbReference type="InterPro" id="IPR023575">
    <property type="entry name" value="Ribosomal_uS19_SF"/>
</dbReference>
<dbReference type="NCBIfam" id="NF003121">
    <property type="entry name" value="PRK04038.1"/>
    <property type="match status" value="1"/>
</dbReference>
<dbReference type="NCBIfam" id="TIGR01025">
    <property type="entry name" value="uS19_arch"/>
    <property type="match status" value="1"/>
</dbReference>
<dbReference type="PANTHER" id="PTHR11880">
    <property type="entry name" value="RIBOSOMAL PROTEIN S19P FAMILY MEMBER"/>
    <property type="match status" value="1"/>
</dbReference>
<dbReference type="PANTHER" id="PTHR11880:SF2">
    <property type="entry name" value="SMALL RIBOSOMAL SUBUNIT PROTEIN US19"/>
    <property type="match status" value="1"/>
</dbReference>
<dbReference type="Pfam" id="PF00203">
    <property type="entry name" value="Ribosomal_S19"/>
    <property type="match status" value="1"/>
</dbReference>
<dbReference type="PIRSF" id="PIRSF002144">
    <property type="entry name" value="Ribosomal_S19"/>
    <property type="match status" value="1"/>
</dbReference>
<dbReference type="PRINTS" id="PR00975">
    <property type="entry name" value="RIBOSOMALS19"/>
</dbReference>
<dbReference type="SUPFAM" id="SSF54570">
    <property type="entry name" value="Ribosomal protein S19"/>
    <property type="match status" value="1"/>
</dbReference>
<dbReference type="PROSITE" id="PS00323">
    <property type="entry name" value="RIBOSOMAL_S19"/>
    <property type="match status" value="1"/>
</dbReference>
<gene>
    <name evidence="1" type="primary">rps19</name>
    <name type="ordered locus">NP_4862A</name>
</gene>
<evidence type="ECO:0000255" key="1">
    <source>
        <dbReference type="HAMAP-Rule" id="MF_00531"/>
    </source>
</evidence>
<evidence type="ECO:0000305" key="2"/>
<organism>
    <name type="scientific">Natronomonas pharaonis (strain ATCC 35678 / DSM 2160 / CIP 103997 / JCM 8858 / NBRC 14720 / NCIMB 2260 / Gabara)</name>
    <name type="common">Halobacterium pharaonis</name>
    <dbReference type="NCBI Taxonomy" id="348780"/>
    <lineage>
        <taxon>Archaea</taxon>
        <taxon>Methanobacteriati</taxon>
        <taxon>Methanobacteriota</taxon>
        <taxon>Stenosarchaea group</taxon>
        <taxon>Halobacteria</taxon>
        <taxon>Halobacteriales</taxon>
        <taxon>Haloarculaceae</taxon>
        <taxon>Natronomonas</taxon>
    </lineage>
</organism>
<keyword id="KW-1185">Reference proteome</keyword>
<keyword id="KW-0687">Ribonucleoprotein</keyword>
<keyword id="KW-0689">Ribosomal protein</keyword>
<keyword id="KW-0694">RNA-binding</keyword>
<keyword id="KW-0699">rRNA-binding</keyword>
<accession>Q3IMY4</accession>
<protein>
    <recommendedName>
        <fullName evidence="1">Small ribosomal subunit protein uS19</fullName>
    </recommendedName>
    <alternativeName>
        <fullName evidence="2">30S ribosomal protein S19</fullName>
    </alternativeName>
</protein>